<organism>
    <name type="scientific">Wolbachia sp. subsp. Brugia malayi (strain TRS)</name>
    <dbReference type="NCBI Taxonomy" id="292805"/>
    <lineage>
        <taxon>Bacteria</taxon>
        <taxon>Pseudomonadati</taxon>
        <taxon>Pseudomonadota</taxon>
        <taxon>Alphaproteobacteria</taxon>
        <taxon>Rickettsiales</taxon>
        <taxon>Anaplasmataceae</taxon>
        <taxon>Wolbachieae</taxon>
        <taxon>Wolbachia</taxon>
    </lineage>
</organism>
<sequence length="119" mass="12713">MIQKNTLLEVADNSGAREVLCIGLLGGRKSASIGDTIVVSTKSVNPKGKVEKGKVYRAVVVRVKNCIRKSDNSVIRFSSNAVVLVNNQGEPLGTRVFGPVKKLPSGSFMKIMSLAVEVL</sequence>
<evidence type="ECO:0000255" key="1">
    <source>
        <dbReference type="HAMAP-Rule" id="MF_01367"/>
    </source>
</evidence>
<evidence type="ECO:0000305" key="2"/>
<gene>
    <name evidence="1" type="primary">rplN</name>
    <name type="ordered locus">Wbm0331</name>
</gene>
<accession>Q5GSV4</accession>
<proteinExistence type="inferred from homology"/>
<comment type="function">
    <text evidence="1">Binds to 23S rRNA. Forms part of two intersubunit bridges in the 70S ribosome.</text>
</comment>
<comment type="subunit">
    <text evidence="1">Part of the 50S ribosomal subunit. Forms a cluster with proteins L3 and L19. In the 70S ribosome, L14 and L19 interact and together make contacts with the 16S rRNA in bridges B5 and B8.</text>
</comment>
<comment type="similarity">
    <text evidence="1">Belongs to the universal ribosomal protein uL14 family.</text>
</comment>
<dbReference type="EMBL" id="AE017321">
    <property type="protein sequence ID" value="AAW70920.1"/>
    <property type="molecule type" value="Genomic_DNA"/>
</dbReference>
<dbReference type="RefSeq" id="WP_011256530.1">
    <property type="nucleotide sequence ID" value="NC_006833.1"/>
</dbReference>
<dbReference type="SMR" id="Q5GSV4"/>
<dbReference type="STRING" id="292805.Wbm0331"/>
<dbReference type="KEGG" id="wbm:Wbm0331"/>
<dbReference type="eggNOG" id="COG0093">
    <property type="taxonomic scope" value="Bacteria"/>
</dbReference>
<dbReference type="HOGENOM" id="CLU_095071_2_2_5"/>
<dbReference type="Proteomes" id="UP000000534">
    <property type="component" value="Chromosome"/>
</dbReference>
<dbReference type="GO" id="GO:0022625">
    <property type="term" value="C:cytosolic large ribosomal subunit"/>
    <property type="evidence" value="ECO:0007669"/>
    <property type="project" value="TreeGrafter"/>
</dbReference>
<dbReference type="GO" id="GO:0070180">
    <property type="term" value="F:large ribosomal subunit rRNA binding"/>
    <property type="evidence" value="ECO:0007669"/>
    <property type="project" value="TreeGrafter"/>
</dbReference>
<dbReference type="GO" id="GO:0003735">
    <property type="term" value="F:structural constituent of ribosome"/>
    <property type="evidence" value="ECO:0007669"/>
    <property type="project" value="InterPro"/>
</dbReference>
<dbReference type="GO" id="GO:0006412">
    <property type="term" value="P:translation"/>
    <property type="evidence" value="ECO:0007669"/>
    <property type="project" value="UniProtKB-UniRule"/>
</dbReference>
<dbReference type="CDD" id="cd00337">
    <property type="entry name" value="Ribosomal_uL14"/>
    <property type="match status" value="1"/>
</dbReference>
<dbReference type="Gene3D" id="2.40.150.20">
    <property type="entry name" value="Ribosomal protein L14"/>
    <property type="match status" value="1"/>
</dbReference>
<dbReference type="HAMAP" id="MF_01367">
    <property type="entry name" value="Ribosomal_uL14"/>
    <property type="match status" value="1"/>
</dbReference>
<dbReference type="InterPro" id="IPR000218">
    <property type="entry name" value="Ribosomal_uL14"/>
</dbReference>
<dbReference type="InterPro" id="IPR005745">
    <property type="entry name" value="Ribosomal_uL14_bac-type"/>
</dbReference>
<dbReference type="InterPro" id="IPR036853">
    <property type="entry name" value="Ribosomal_uL14_sf"/>
</dbReference>
<dbReference type="NCBIfam" id="TIGR01067">
    <property type="entry name" value="rplN_bact"/>
    <property type="match status" value="1"/>
</dbReference>
<dbReference type="PANTHER" id="PTHR11761">
    <property type="entry name" value="50S/60S RIBOSOMAL PROTEIN L14/L23"/>
    <property type="match status" value="1"/>
</dbReference>
<dbReference type="PANTHER" id="PTHR11761:SF3">
    <property type="entry name" value="LARGE RIBOSOMAL SUBUNIT PROTEIN UL14M"/>
    <property type="match status" value="1"/>
</dbReference>
<dbReference type="Pfam" id="PF00238">
    <property type="entry name" value="Ribosomal_L14"/>
    <property type="match status" value="1"/>
</dbReference>
<dbReference type="SMART" id="SM01374">
    <property type="entry name" value="Ribosomal_L14"/>
    <property type="match status" value="1"/>
</dbReference>
<dbReference type="SUPFAM" id="SSF50193">
    <property type="entry name" value="Ribosomal protein L14"/>
    <property type="match status" value="1"/>
</dbReference>
<name>RL14_WOLTR</name>
<keyword id="KW-1185">Reference proteome</keyword>
<keyword id="KW-0687">Ribonucleoprotein</keyword>
<keyword id="KW-0689">Ribosomal protein</keyword>
<keyword id="KW-0694">RNA-binding</keyword>
<keyword id="KW-0699">rRNA-binding</keyword>
<feature type="chain" id="PRO_0000355842" description="Large ribosomal subunit protein uL14">
    <location>
        <begin position="1"/>
        <end position="119"/>
    </location>
</feature>
<reference key="1">
    <citation type="journal article" date="2005" name="PLoS Biol.">
        <title>The Wolbachia genome of Brugia malayi: endosymbiont evolution within a human pathogenic nematode.</title>
        <authorList>
            <person name="Foster J."/>
            <person name="Ganatra M."/>
            <person name="Kamal I."/>
            <person name="Ware J."/>
            <person name="Makarova K."/>
            <person name="Ivanova N."/>
            <person name="Bhattacharyya A."/>
            <person name="Kapatral V."/>
            <person name="Kumar S."/>
            <person name="Posfai J."/>
            <person name="Vincze T."/>
            <person name="Ingram J."/>
            <person name="Moran L."/>
            <person name="Lapidus A."/>
            <person name="Omelchenko M."/>
            <person name="Kyrpides N."/>
            <person name="Ghedin E."/>
            <person name="Wang S."/>
            <person name="Goltsman E."/>
            <person name="Joukov V."/>
            <person name="Ostrovskaya O."/>
            <person name="Tsukerman K."/>
            <person name="Mazur M."/>
            <person name="Comb D."/>
            <person name="Koonin E."/>
            <person name="Slatko B."/>
        </authorList>
    </citation>
    <scope>NUCLEOTIDE SEQUENCE [LARGE SCALE GENOMIC DNA]</scope>
    <source>
        <strain>TRS</strain>
    </source>
</reference>
<protein>
    <recommendedName>
        <fullName evidence="1">Large ribosomal subunit protein uL14</fullName>
    </recommendedName>
    <alternativeName>
        <fullName evidence="2">50S ribosomal protein L14</fullName>
    </alternativeName>
</protein>